<feature type="chain" id="PRO_0000329101" description="Aspartate carbamoyltransferase catalytic subunit">
    <location>
        <begin position="1"/>
        <end position="343"/>
    </location>
</feature>
<feature type="binding site" evidence="1">
    <location>
        <position position="91"/>
    </location>
    <ligand>
        <name>carbamoyl phosphate</name>
        <dbReference type="ChEBI" id="CHEBI:58228"/>
    </ligand>
</feature>
<feature type="binding site" evidence="1">
    <location>
        <position position="92"/>
    </location>
    <ligand>
        <name>carbamoyl phosphate</name>
        <dbReference type="ChEBI" id="CHEBI:58228"/>
    </ligand>
</feature>
<feature type="binding site" evidence="1">
    <location>
        <position position="119"/>
    </location>
    <ligand>
        <name>L-aspartate</name>
        <dbReference type="ChEBI" id="CHEBI:29991"/>
    </ligand>
</feature>
<feature type="binding site" evidence="1">
    <location>
        <position position="141"/>
    </location>
    <ligand>
        <name>carbamoyl phosphate</name>
        <dbReference type="ChEBI" id="CHEBI:58228"/>
    </ligand>
</feature>
<feature type="binding site" evidence="1">
    <location>
        <position position="171"/>
    </location>
    <ligand>
        <name>carbamoyl phosphate</name>
        <dbReference type="ChEBI" id="CHEBI:58228"/>
    </ligand>
</feature>
<feature type="binding site" evidence="1">
    <location>
        <position position="174"/>
    </location>
    <ligand>
        <name>carbamoyl phosphate</name>
        <dbReference type="ChEBI" id="CHEBI:58228"/>
    </ligand>
</feature>
<feature type="binding site" evidence="1">
    <location>
        <position position="204"/>
    </location>
    <ligand>
        <name>L-aspartate</name>
        <dbReference type="ChEBI" id="CHEBI:29991"/>
    </ligand>
</feature>
<feature type="binding site" evidence="1">
    <location>
        <position position="259"/>
    </location>
    <ligand>
        <name>L-aspartate</name>
        <dbReference type="ChEBI" id="CHEBI:29991"/>
    </ligand>
</feature>
<feature type="binding site" evidence="1">
    <location>
        <position position="300"/>
    </location>
    <ligand>
        <name>carbamoyl phosphate</name>
        <dbReference type="ChEBI" id="CHEBI:58228"/>
    </ligand>
</feature>
<feature type="binding site" evidence="1">
    <location>
        <position position="301"/>
    </location>
    <ligand>
        <name>carbamoyl phosphate</name>
        <dbReference type="ChEBI" id="CHEBI:58228"/>
    </ligand>
</feature>
<evidence type="ECO:0000255" key="1">
    <source>
        <dbReference type="HAMAP-Rule" id="MF_00001"/>
    </source>
</evidence>
<evidence type="ECO:0000305" key="2"/>
<sequence length="343" mass="37387">MTTDTSGRTGNPAAAAPAERFRYGFLKGNPQLTKNGELKHLLTIEGLPRAILNQILDTAEQFVSVTDREVKKVPLLRGKSVFNLFFENSTRTRTTFEIAAKRLSADVINLNINASSTSKGESLLDTINNLSAMHADLFVVRHASSGAPYLIAEHCAPHVHVINAGDGRHAHPTQGLLDMYTIRHYKRDFTKLRVAIVGDILHSRVARSDIHALTTLGVPEVRAIGPRTLLPGGLEQMGVRVFHNLDEGLRDVDVIIMLRLQNERMSGALLPSAQEYFKSWGLTPERLALAAPDAIVMHPGPMNRGVEIDSQVADGPQSVILNQVTFGIAVRMAVMGIVAGTSD</sequence>
<comment type="function">
    <text evidence="1">Catalyzes the condensation of carbamoyl phosphate and aspartate to form carbamoyl aspartate and inorganic phosphate, the committed step in the de novo pyrimidine nucleotide biosynthesis pathway.</text>
</comment>
<comment type="catalytic activity">
    <reaction evidence="1">
        <text>carbamoyl phosphate + L-aspartate = N-carbamoyl-L-aspartate + phosphate + H(+)</text>
        <dbReference type="Rhea" id="RHEA:20013"/>
        <dbReference type="ChEBI" id="CHEBI:15378"/>
        <dbReference type="ChEBI" id="CHEBI:29991"/>
        <dbReference type="ChEBI" id="CHEBI:32814"/>
        <dbReference type="ChEBI" id="CHEBI:43474"/>
        <dbReference type="ChEBI" id="CHEBI:58228"/>
        <dbReference type="EC" id="2.1.3.2"/>
    </reaction>
</comment>
<comment type="pathway">
    <text evidence="1">Pyrimidine metabolism; UMP biosynthesis via de novo pathway; (S)-dihydroorotate from bicarbonate: step 2/3.</text>
</comment>
<comment type="subunit">
    <text evidence="1">Heterododecamer (2C3:3R2) of six catalytic PyrB chains organized as two trimers (C3), and six regulatory PyrI chains organized as three dimers (R2).</text>
</comment>
<comment type="similarity">
    <text evidence="1">Belongs to the aspartate/ornithine carbamoyltransferase superfamily. ATCase family.</text>
</comment>
<comment type="sequence caution" evidence="2">
    <conflict type="erroneous initiation">
        <sequence resource="EMBL-CDS" id="ABN92549"/>
    </conflict>
</comment>
<keyword id="KW-0665">Pyrimidine biosynthesis</keyword>
<keyword id="KW-0808">Transferase</keyword>
<dbReference type="EC" id="2.1.3.2" evidence="1"/>
<dbReference type="EMBL" id="CP000572">
    <property type="protein sequence ID" value="ABN92549.1"/>
    <property type="status" value="ALT_INIT"/>
    <property type="molecule type" value="Genomic_DNA"/>
</dbReference>
<dbReference type="RefSeq" id="WP_004534003.1">
    <property type="nucleotide sequence ID" value="NC_009076.1"/>
</dbReference>
<dbReference type="SMR" id="A3NYG2"/>
<dbReference type="KEGG" id="bpl:BURPS1106A_3145"/>
<dbReference type="HOGENOM" id="CLU_043846_2_0_4"/>
<dbReference type="UniPathway" id="UPA00070">
    <property type="reaction ID" value="UER00116"/>
</dbReference>
<dbReference type="Proteomes" id="UP000006738">
    <property type="component" value="Chromosome I"/>
</dbReference>
<dbReference type="GO" id="GO:0005829">
    <property type="term" value="C:cytosol"/>
    <property type="evidence" value="ECO:0007669"/>
    <property type="project" value="TreeGrafter"/>
</dbReference>
<dbReference type="GO" id="GO:0016597">
    <property type="term" value="F:amino acid binding"/>
    <property type="evidence" value="ECO:0007669"/>
    <property type="project" value="InterPro"/>
</dbReference>
<dbReference type="GO" id="GO:0004070">
    <property type="term" value="F:aspartate carbamoyltransferase activity"/>
    <property type="evidence" value="ECO:0007669"/>
    <property type="project" value="UniProtKB-UniRule"/>
</dbReference>
<dbReference type="GO" id="GO:0006207">
    <property type="term" value="P:'de novo' pyrimidine nucleobase biosynthetic process"/>
    <property type="evidence" value="ECO:0007669"/>
    <property type="project" value="InterPro"/>
</dbReference>
<dbReference type="GO" id="GO:0044205">
    <property type="term" value="P:'de novo' UMP biosynthetic process"/>
    <property type="evidence" value="ECO:0007669"/>
    <property type="project" value="UniProtKB-UniRule"/>
</dbReference>
<dbReference type="GO" id="GO:0006520">
    <property type="term" value="P:amino acid metabolic process"/>
    <property type="evidence" value="ECO:0007669"/>
    <property type="project" value="InterPro"/>
</dbReference>
<dbReference type="FunFam" id="3.40.50.1370:FF:000007">
    <property type="entry name" value="Aspartate carbamoyltransferase"/>
    <property type="match status" value="1"/>
</dbReference>
<dbReference type="Gene3D" id="3.40.50.1370">
    <property type="entry name" value="Aspartate/ornithine carbamoyltransferase"/>
    <property type="match status" value="2"/>
</dbReference>
<dbReference type="HAMAP" id="MF_00001">
    <property type="entry name" value="Asp_carb_tr"/>
    <property type="match status" value="1"/>
</dbReference>
<dbReference type="InterPro" id="IPR006132">
    <property type="entry name" value="Asp/Orn_carbamoyltranf_P-bd"/>
</dbReference>
<dbReference type="InterPro" id="IPR006130">
    <property type="entry name" value="Asp/Orn_carbamoylTrfase"/>
</dbReference>
<dbReference type="InterPro" id="IPR036901">
    <property type="entry name" value="Asp/Orn_carbamoylTrfase_sf"/>
</dbReference>
<dbReference type="InterPro" id="IPR002082">
    <property type="entry name" value="Asp_carbamoyltransf"/>
</dbReference>
<dbReference type="InterPro" id="IPR006131">
    <property type="entry name" value="Asp_carbamoyltransf_Asp/Orn-bd"/>
</dbReference>
<dbReference type="NCBIfam" id="TIGR00670">
    <property type="entry name" value="asp_carb_tr"/>
    <property type="match status" value="1"/>
</dbReference>
<dbReference type="NCBIfam" id="NF002032">
    <property type="entry name" value="PRK00856.1"/>
    <property type="match status" value="1"/>
</dbReference>
<dbReference type="PANTHER" id="PTHR45753:SF6">
    <property type="entry name" value="ASPARTATE CARBAMOYLTRANSFERASE"/>
    <property type="match status" value="1"/>
</dbReference>
<dbReference type="PANTHER" id="PTHR45753">
    <property type="entry name" value="ORNITHINE CARBAMOYLTRANSFERASE, MITOCHONDRIAL"/>
    <property type="match status" value="1"/>
</dbReference>
<dbReference type="Pfam" id="PF00185">
    <property type="entry name" value="OTCace"/>
    <property type="match status" value="1"/>
</dbReference>
<dbReference type="Pfam" id="PF02729">
    <property type="entry name" value="OTCace_N"/>
    <property type="match status" value="1"/>
</dbReference>
<dbReference type="PRINTS" id="PR00100">
    <property type="entry name" value="AOTCASE"/>
</dbReference>
<dbReference type="PRINTS" id="PR00101">
    <property type="entry name" value="ATCASE"/>
</dbReference>
<dbReference type="SUPFAM" id="SSF53671">
    <property type="entry name" value="Aspartate/ornithine carbamoyltransferase"/>
    <property type="match status" value="1"/>
</dbReference>
<dbReference type="PROSITE" id="PS00097">
    <property type="entry name" value="CARBAMOYLTRANSFERASE"/>
    <property type="match status" value="1"/>
</dbReference>
<protein>
    <recommendedName>
        <fullName evidence="1">Aspartate carbamoyltransferase catalytic subunit</fullName>
        <ecNumber evidence="1">2.1.3.2</ecNumber>
    </recommendedName>
    <alternativeName>
        <fullName evidence="1">Aspartate transcarbamylase</fullName>
        <shortName evidence="1">ATCase</shortName>
    </alternativeName>
</protein>
<reference key="1">
    <citation type="journal article" date="2010" name="Genome Biol. Evol.">
        <title>Continuing evolution of Burkholderia mallei through genome reduction and large-scale rearrangements.</title>
        <authorList>
            <person name="Losada L."/>
            <person name="Ronning C.M."/>
            <person name="DeShazer D."/>
            <person name="Woods D."/>
            <person name="Fedorova N."/>
            <person name="Kim H.S."/>
            <person name="Shabalina S.A."/>
            <person name="Pearson T.R."/>
            <person name="Brinkac L."/>
            <person name="Tan P."/>
            <person name="Nandi T."/>
            <person name="Crabtree J."/>
            <person name="Badger J."/>
            <person name="Beckstrom-Sternberg S."/>
            <person name="Saqib M."/>
            <person name="Schutzer S.E."/>
            <person name="Keim P."/>
            <person name="Nierman W.C."/>
        </authorList>
    </citation>
    <scope>NUCLEOTIDE SEQUENCE [LARGE SCALE GENOMIC DNA]</scope>
    <source>
        <strain>1106a</strain>
    </source>
</reference>
<gene>
    <name evidence="1" type="primary">pyrB</name>
    <name type="ordered locus">BURPS1106A_3145</name>
</gene>
<proteinExistence type="inferred from homology"/>
<organism>
    <name type="scientific">Burkholderia pseudomallei (strain 1106a)</name>
    <dbReference type="NCBI Taxonomy" id="357348"/>
    <lineage>
        <taxon>Bacteria</taxon>
        <taxon>Pseudomonadati</taxon>
        <taxon>Pseudomonadota</taxon>
        <taxon>Betaproteobacteria</taxon>
        <taxon>Burkholderiales</taxon>
        <taxon>Burkholderiaceae</taxon>
        <taxon>Burkholderia</taxon>
        <taxon>pseudomallei group</taxon>
    </lineage>
</organism>
<name>PYRB_BURP0</name>
<accession>A3NYG2</accession>